<evidence type="ECO:0000255" key="1">
    <source>
        <dbReference type="HAMAP-Rule" id="MF_01326"/>
    </source>
</evidence>
<evidence type="ECO:0000305" key="2"/>
<proteinExistence type="inferred from homology"/>
<organism>
    <name type="scientific">Alcanivorax borkumensis (strain ATCC 700651 / DSM 11573 / NCIMB 13689 / SK2)</name>
    <dbReference type="NCBI Taxonomy" id="393595"/>
    <lineage>
        <taxon>Bacteria</taxon>
        <taxon>Pseudomonadati</taxon>
        <taxon>Pseudomonadota</taxon>
        <taxon>Gammaproteobacteria</taxon>
        <taxon>Oceanospirillales</taxon>
        <taxon>Alcanivoracaceae</taxon>
        <taxon>Alcanivorax</taxon>
    </lineage>
</organism>
<accession>Q0VSJ2</accession>
<comment type="function">
    <text evidence="1">One of two assembly initiator proteins, it binds directly to the 5'-end of the 23S rRNA, where it nucleates assembly of the 50S subunit.</text>
</comment>
<comment type="function">
    <text evidence="1">One of the proteins that surrounds the polypeptide exit tunnel on the outside of the subunit.</text>
</comment>
<comment type="subunit">
    <text evidence="1">Part of the 50S ribosomal subunit.</text>
</comment>
<comment type="similarity">
    <text evidence="1">Belongs to the universal ribosomal protein uL24 family.</text>
</comment>
<dbReference type="EMBL" id="AM286690">
    <property type="protein sequence ID" value="CAL15856.1"/>
    <property type="molecule type" value="Genomic_DNA"/>
</dbReference>
<dbReference type="RefSeq" id="WP_011587696.1">
    <property type="nucleotide sequence ID" value="NC_008260.1"/>
</dbReference>
<dbReference type="SMR" id="Q0VSJ2"/>
<dbReference type="STRING" id="393595.ABO_0408"/>
<dbReference type="KEGG" id="abo:ABO_0408"/>
<dbReference type="eggNOG" id="COG0198">
    <property type="taxonomic scope" value="Bacteria"/>
</dbReference>
<dbReference type="HOGENOM" id="CLU_093315_2_2_6"/>
<dbReference type="OrthoDB" id="9807419at2"/>
<dbReference type="Proteomes" id="UP000008871">
    <property type="component" value="Chromosome"/>
</dbReference>
<dbReference type="GO" id="GO:1990904">
    <property type="term" value="C:ribonucleoprotein complex"/>
    <property type="evidence" value="ECO:0007669"/>
    <property type="project" value="UniProtKB-KW"/>
</dbReference>
<dbReference type="GO" id="GO:0005840">
    <property type="term" value="C:ribosome"/>
    <property type="evidence" value="ECO:0007669"/>
    <property type="project" value="UniProtKB-KW"/>
</dbReference>
<dbReference type="GO" id="GO:0019843">
    <property type="term" value="F:rRNA binding"/>
    <property type="evidence" value="ECO:0007669"/>
    <property type="project" value="UniProtKB-UniRule"/>
</dbReference>
<dbReference type="GO" id="GO:0003735">
    <property type="term" value="F:structural constituent of ribosome"/>
    <property type="evidence" value="ECO:0007669"/>
    <property type="project" value="InterPro"/>
</dbReference>
<dbReference type="GO" id="GO:0006412">
    <property type="term" value="P:translation"/>
    <property type="evidence" value="ECO:0007669"/>
    <property type="project" value="UniProtKB-UniRule"/>
</dbReference>
<dbReference type="CDD" id="cd06089">
    <property type="entry name" value="KOW_RPL26"/>
    <property type="match status" value="1"/>
</dbReference>
<dbReference type="FunFam" id="2.30.30.30:FF:000004">
    <property type="entry name" value="50S ribosomal protein L24"/>
    <property type="match status" value="1"/>
</dbReference>
<dbReference type="Gene3D" id="2.30.30.30">
    <property type="match status" value="1"/>
</dbReference>
<dbReference type="HAMAP" id="MF_01326_B">
    <property type="entry name" value="Ribosomal_uL24_B"/>
    <property type="match status" value="1"/>
</dbReference>
<dbReference type="InterPro" id="IPR005824">
    <property type="entry name" value="KOW"/>
</dbReference>
<dbReference type="InterPro" id="IPR014722">
    <property type="entry name" value="Rib_uL2_dom2"/>
</dbReference>
<dbReference type="InterPro" id="IPR003256">
    <property type="entry name" value="Ribosomal_uL24"/>
</dbReference>
<dbReference type="InterPro" id="IPR005825">
    <property type="entry name" value="Ribosomal_uL24_CS"/>
</dbReference>
<dbReference type="InterPro" id="IPR041988">
    <property type="entry name" value="Ribosomal_uL24_KOW"/>
</dbReference>
<dbReference type="InterPro" id="IPR008991">
    <property type="entry name" value="Translation_prot_SH3-like_sf"/>
</dbReference>
<dbReference type="NCBIfam" id="TIGR01079">
    <property type="entry name" value="rplX_bact"/>
    <property type="match status" value="1"/>
</dbReference>
<dbReference type="PANTHER" id="PTHR12903">
    <property type="entry name" value="MITOCHONDRIAL RIBOSOMAL PROTEIN L24"/>
    <property type="match status" value="1"/>
</dbReference>
<dbReference type="Pfam" id="PF00467">
    <property type="entry name" value="KOW"/>
    <property type="match status" value="1"/>
</dbReference>
<dbReference type="Pfam" id="PF17136">
    <property type="entry name" value="ribosomal_L24"/>
    <property type="match status" value="1"/>
</dbReference>
<dbReference type="SMART" id="SM00739">
    <property type="entry name" value="KOW"/>
    <property type="match status" value="1"/>
</dbReference>
<dbReference type="SUPFAM" id="SSF50104">
    <property type="entry name" value="Translation proteins SH3-like domain"/>
    <property type="match status" value="1"/>
</dbReference>
<dbReference type="PROSITE" id="PS01108">
    <property type="entry name" value="RIBOSOMAL_L24"/>
    <property type="match status" value="1"/>
</dbReference>
<gene>
    <name evidence="1" type="primary">rplX</name>
    <name type="ordered locus">ABO_0408</name>
</gene>
<name>RL24_ALCBS</name>
<protein>
    <recommendedName>
        <fullName evidence="1">Large ribosomal subunit protein uL24</fullName>
    </recommendedName>
    <alternativeName>
        <fullName evidence="2">50S ribosomal protein L24</fullName>
    </alternativeName>
</protein>
<reference key="1">
    <citation type="journal article" date="2006" name="Nat. Biotechnol.">
        <title>Genome sequence of the ubiquitous hydrocarbon-degrading marine bacterium Alcanivorax borkumensis.</title>
        <authorList>
            <person name="Schneiker S."/>
            <person name="Martins dos Santos V.A.P."/>
            <person name="Bartels D."/>
            <person name="Bekel T."/>
            <person name="Brecht M."/>
            <person name="Buhrmester J."/>
            <person name="Chernikova T.N."/>
            <person name="Denaro R."/>
            <person name="Ferrer M."/>
            <person name="Gertler C."/>
            <person name="Goesmann A."/>
            <person name="Golyshina O.V."/>
            <person name="Kaminski F."/>
            <person name="Khachane A.N."/>
            <person name="Lang S."/>
            <person name="Linke B."/>
            <person name="McHardy A.C."/>
            <person name="Meyer F."/>
            <person name="Nechitaylo T."/>
            <person name="Puehler A."/>
            <person name="Regenhardt D."/>
            <person name="Rupp O."/>
            <person name="Sabirova J.S."/>
            <person name="Selbitschka W."/>
            <person name="Yakimov M.M."/>
            <person name="Timmis K.N."/>
            <person name="Vorhoelter F.-J."/>
            <person name="Weidner S."/>
            <person name="Kaiser O."/>
            <person name="Golyshin P.N."/>
        </authorList>
    </citation>
    <scope>NUCLEOTIDE SEQUENCE [LARGE SCALE GENOMIC DNA]</scope>
    <source>
        <strain>ATCC 700651 / DSM 11573 / NCIMB 13689 / SK2</strain>
    </source>
</reference>
<sequence length="102" mass="11231">MLKIKRDDEIIVIAGKDKGKRGSVQQVLDNGRLIVAGVNMVKKHVKANPNRGTQGGIVEQEASLNASNVAIWNPKTQKADRVGFRFEDGKKVRFFKSNGEAL</sequence>
<keyword id="KW-1185">Reference proteome</keyword>
<keyword id="KW-0687">Ribonucleoprotein</keyword>
<keyword id="KW-0689">Ribosomal protein</keyword>
<keyword id="KW-0694">RNA-binding</keyword>
<keyword id="KW-0699">rRNA-binding</keyword>
<feature type="chain" id="PRO_1000052176" description="Large ribosomal subunit protein uL24">
    <location>
        <begin position="1"/>
        <end position="102"/>
    </location>
</feature>